<comment type="function">
    <text evidence="1">Involved in peptide bond synthesis. Stimulates efficient translation and peptide-bond synthesis on native or reconstituted 70S ribosomes in vitro. Probably functions indirectly by altering the affinity of the ribosome for aminoacyl-tRNA, thus increasing their reactivity as acceptors for peptidyl transferase.</text>
</comment>
<comment type="pathway">
    <text evidence="1">Protein biosynthesis; polypeptide chain elongation.</text>
</comment>
<comment type="subcellular location">
    <subcellularLocation>
        <location evidence="1">Cytoplasm</location>
    </subcellularLocation>
</comment>
<comment type="similarity">
    <text evidence="1">Belongs to the elongation factor P family.</text>
</comment>
<proteinExistence type="inferred from homology"/>
<feature type="chain" id="PRO_0000094251" description="Elongation factor P">
    <location>
        <begin position="1"/>
        <end position="187"/>
    </location>
</feature>
<name>EFP_FUSNN</name>
<reference key="1">
    <citation type="journal article" date="2002" name="J. Bacteriol.">
        <title>Genome sequence and analysis of the oral bacterium Fusobacterium nucleatum strain ATCC 25586.</title>
        <authorList>
            <person name="Kapatral V."/>
            <person name="Anderson I."/>
            <person name="Ivanova N."/>
            <person name="Reznik G."/>
            <person name="Los T."/>
            <person name="Lykidis A."/>
            <person name="Bhattacharyya A."/>
            <person name="Bartman A."/>
            <person name="Gardner W."/>
            <person name="Grechkin G."/>
            <person name="Zhu L."/>
            <person name="Vasieva O."/>
            <person name="Chu L."/>
            <person name="Kogan Y."/>
            <person name="Chaga O."/>
            <person name="Goltsman E."/>
            <person name="Bernal A."/>
            <person name="Larsen N."/>
            <person name="D'Souza M."/>
            <person name="Walunas T."/>
            <person name="Pusch G."/>
            <person name="Haselkorn R."/>
            <person name="Fonstein M."/>
            <person name="Kyrpides N.C."/>
            <person name="Overbeek R."/>
        </authorList>
    </citation>
    <scope>NUCLEOTIDE SEQUENCE [LARGE SCALE GENOMIC DNA]</scope>
    <source>
        <strain>ATCC 25586 / DSM 15643 / BCRC 10681 / CIP 101130 / JCM 8532 / KCTC 2640 / LMG 13131 / VPI 4355</strain>
    </source>
</reference>
<protein>
    <recommendedName>
        <fullName evidence="1">Elongation factor P</fullName>
        <shortName evidence="1">EF-P</shortName>
    </recommendedName>
</protein>
<accession>Q8R5X5</accession>
<evidence type="ECO:0000255" key="1">
    <source>
        <dbReference type="HAMAP-Rule" id="MF_00141"/>
    </source>
</evidence>
<organism>
    <name type="scientific">Fusobacterium nucleatum subsp. nucleatum (strain ATCC 25586 / DSM 15643 / BCRC 10681 / CIP 101130 / JCM 8532 / KCTC 2640 / LMG 13131 / VPI 4355)</name>
    <dbReference type="NCBI Taxonomy" id="190304"/>
    <lineage>
        <taxon>Bacteria</taxon>
        <taxon>Fusobacteriati</taxon>
        <taxon>Fusobacteriota</taxon>
        <taxon>Fusobacteriia</taxon>
        <taxon>Fusobacteriales</taxon>
        <taxon>Fusobacteriaceae</taxon>
        <taxon>Fusobacterium</taxon>
    </lineage>
</organism>
<gene>
    <name evidence="1" type="primary">efp</name>
    <name type="ordered locus">FN0720</name>
</gene>
<sequence>MKIAQELRAGSTIKIGNDPFVVLKAEYNKSGRNAAVVKFKMKNLISGNISDAVYKADDKMDDIKLDKVKAIYSYQNGDSYIFSNPETWEEIELKGEDLGDALNYLEEEMPLDVVYYESTAVAVELPTFVEREVTYTEPGLRGDTSGKVMKPARINTGFEVQVPLFVEQGEWIKIDTRTNEYVERVKK</sequence>
<keyword id="KW-0963">Cytoplasm</keyword>
<keyword id="KW-0251">Elongation factor</keyword>
<keyword id="KW-0648">Protein biosynthesis</keyword>
<keyword id="KW-1185">Reference proteome</keyword>
<dbReference type="EMBL" id="AE009951">
    <property type="protein sequence ID" value="AAL94916.1"/>
    <property type="molecule type" value="Genomic_DNA"/>
</dbReference>
<dbReference type="RefSeq" id="NP_603617.1">
    <property type="nucleotide sequence ID" value="NC_003454.1"/>
</dbReference>
<dbReference type="RefSeq" id="WP_005897833.1">
    <property type="nucleotide sequence ID" value="NZ_OZ209243.1"/>
</dbReference>
<dbReference type="SMR" id="Q8R5X5"/>
<dbReference type="FunCoup" id="Q8R5X5">
    <property type="interactions" value="365"/>
</dbReference>
<dbReference type="STRING" id="190304.FN0720"/>
<dbReference type="PaxDb" id="190304-FN0720"/>
<dbReference type="EnsemblBacteria" id="AAL94916">
    <property type="protein sequence ID" value="AAL94916"/>
    <property type="gene ID" value="FN0720"/>
</dbReference>
<dbReference type="GeneID" id="93328979"/>
<dbReference type="KEGG" id="fnu:FN0720"/>
<dbReference type="PATRIC" id="fig|190304.8.peg.1283"/>
<dbReference type="eggNOG" id="COG0231">
    <property type="taxonomic scope" value="Bacteria"/>
</dbReference>
<dbReference type="HOGENOM" id="CLU_074944_2_1_0"/>
<dbReference type="InParanoid" id="Q8R5X5"/>
<dbReference type="BioCyc" id="FNUC190304:G1FZS-1306-MONOMER"/>
<dbReference type="UniPathway" id="UPA00345"/>
<dbReference type="Proteomes" id="UP000002521">
    <property type="component" value="Chromosome"/>
</dbReference>
<dbReference type="GO" id="GO:0005737">
    <property type="term" value="C:cytoplasm"/>
    <property type="evidence" value="ECO:0000318"/>
    <property type="project" value="GO_Central"/>
</dbReference>
<dbReference type="GO" id="GO:0003746">
    <property type="term" value="F:translation elongation factor activity"/>
    <property type="evidence" value="ECO:0000318"/>
    <property type="project" value="GO_Central"/>
</dbReference>
<dbReference type="GO" id="GO:0043043">
    <property type="term" value="P:peptide biosynthetic process"/>
    <property type="evidence" value="ECO:0007669"/>
    <property type="project" value="InterPro"/>
</dbReference>
<dbReference type="CDD" id="cd04470">
    <property type="entry name" value="S1_EF-P_repeat_1"/>
    <property type="match status" value="1"/>
</dbReference>
<dbReference type="CDD" id="cd05794">
    <property type="entry name" value="S1_EF-P_repeat_2"/>
    <property type="match status" value="1"/>
</dbReference>
<dbReference type="FunFam" id="2.30.30.30:FF:000003">
    <property type="entry name" value="Elongation factor P"/>
    <property type="match status" value="1"/>
</dbReference>
<dbReference type="FunFam" id="2.40.50.140:FF:000004">
    <property type="entry name" value="Elongation factor P"/>
    <property type="match status" value="1"/>
</dbReference>
<dbReference type="FunFam" id="2.40.50.140:FF:000243">
    <property type="entry name" value="Elongation factor P"/>
    <property type="match status" value="1"/>
</dbReference>
<dbReference type="Gene3D" id="2.30.30.30">
    <property type="match status" value="1"/>
</dbReference>
<dbReference type="Gene3D" id="2.40.50.140">
    <property type="entry name" value="Nucleic acid-binding proteins"/>
    <property type="match status" value="2"/>
</dbReference>
<dbReference type="HAMAP" id="MF_00141">
    <property type="entry name" value="EF_P"/>
    <property type="match status" value="1"/>
</dbReference>
<dbReference type="InterPro" id="IPR015365">
    <property type="entry name" value="Elong-fact-P_C"/>
</dbReference>
<dbReference type="InterPro" id="IPR012340">
    <property type="entry name" value="NA-bd_OB-fold"/>
</dbReference>
<dbReference type="InterPro" id="IPR014722">
    <property type="entry name" value="Rib_uL2_dom2"/>
</dbReference>
<dbReference type="InterPro" id="IPR020599">
    <property type="entry name" value="Transl_elong_fac_P/YeiP"/>
</dbReference>
<dbReference type="InterPro" id="IPR013185">
    <property type="entry name" value="Transl_elong_KOW-like"/>
</dbReference>
<dbReference type="InterPro" id="IPR001059">
    <property type="entry name" value="Transl_elong_P/YeiP_cen"/>
</dbReference>
<dbReference type="InterPro" id="IPR013852">
    <property type="entry name" value="Transl_elong_P/YeiP_CS"/>
</dbReference>
<dbReference type="InterPro" id="IPR011768">
    <property type="entry name" value="Transl_elongation_fac_P"/>
</dbReference>
<dbReference type="InterPro" id="IPR008991">
    <property type="entry name" value="Translation_prot_SH3-like_sf"/>
</dbReference>
<dbReference type="NCBIfam" id="TIGR00038">
    <property type="entry name" value="efp"/>
    <property type="match status" value="1"/>
</dbReference>
<dbReference type="NCBIfam" id="NF001810">
    <property type="entry name" value="PRK00529.1"/>
    <property type="match status" value="1"/>
</dbReference>
<dbReference type="PANTHER" id="PTHR30053">
    <property type="entry name" value="ELONGATION FACTOR P"/>
    <property type="match status" value="1"/>
</dbReference>
<dbReference type="PANTHER" id="PTHR30053:SF12">
    <property type="entry name" value="ELONGATION FACTOR P (EF-P) FAMILY PROTEIN"/>
    <property type="match status" value="1"/>
</dbReference>
<dbReference type="Pfam" id="PF01132">
    <property type="entry name" value="EFP"/>
    <property type="match status" value="1"/>
</dbReference>
<dbReference type="Pfam" id="PF08207">
    <property type="entry name" value="EFP_N"/>
    <property type="match status" value="1"/>
</dbReference>
<dbReference type="Pfam" id="PF09285">
    <property type="entry name" value="Elong-fact-P_C"/>
    <property type="match status" value="1"/>
</dbReference>
<dbReference type="PIRSF" id="PIRSF005901">
    <property type="entry name" value="EF-P"/>
    <property type="match status" value="1"/>
</dbReference>
<dbReference type="SMART" id="SM01185">
    <property type="entry name" value="EFP"/>
    <property type="match status" value="1"/>
</dbReference>
<dbReference type="SMART" id="SM00841">
    <property type="entry name" value="Elong-fact-P_C"/>
    <property type="match status" value="1"/>
</dbReference>
<dbReference type="SUPFAM" id="SSF50249">
    <property type="entry name" value="Nucleic acid-binding proteins"/>
    <property type="match status" value="2"/>
</dbReference>
<dbReference type="SUPFAM" id="SSF50104">
    <property type="entry name" value="Translation proteins SH3-like domain"/>
    <property type="match status" value="1"/>
</dbReference>
<dbReference type="PROSITE" id="PS01275">
    <property type="entry name" value="EFP"/>
    <property type="match status" value="1"/>
</dbReference>